<dbReference type="EC" id="5.3.1.12" evidence="1"/>
<dbReference type="EMBL" id="BA000028">
    <property type="protein sequence ID" value="BAC12323.1"/>
    <property type="molecule type" value="Genomic_DNA"/>
</dbReference>
<dbReference type="RefSeq" id="WP_011064772.1">
    <property type="nucleotide sequence ID" value="NC_004193.1"/>
</dbReference>
<dbReference type="SMR" id="Q8CXN4"/>
<dbReference type="STRING" id="221109.gene:10732570"/>
<dbReference type="KEGG" id="oih:OB0367"/>
<dbReference type="eggNOG" id="COG1904">
    <property type="taxonomic scope" value="Bacteria"/>
</dbReference>
<dbReference type="HOGENOM" id="CLU_044465_1_0_9"/>
<dbReference type="OrthoDB" id="9766564at2"/>
<dbReference type="PhylomeDB" id="Q8CXN4"/>
<dbReference type="UniPathway" id="UPA00246"/>
<dbReference type="Proteomes" id="UP000000822">
    <property type="component" value="Chromosome"/>
</dbReference>
<dbReference type="GO" id="GO:0008880">
    <property type="term" value="F:glucuronate isomerase activity"/>
    <property type="evidence" value="ECO:0007669"/>
    <property type="project" value="UniProtKB-UniRule"/>
</dbReference>
<dbReference type="GO" id="GO:0019698">
    <property type="term" value="P:D-galacturonate catabolic process"/>
    <property type="evidence" value="ECO:0007669"/>
    <property type="project" value="TreeGrafter"/>
</dbReference>
<dbReference type="GO" id="GO:0042840">
    <property type="term" value="P:D-glucuronate catabolic process"/>
    <property type="evidence" value="ECO:0007669"/>
    <property type="project" value="TreeGrafter"/>
</dbReference>
<dbReference type="Gene3D" id="3.20.20.140">
    <property type="entry name" value="Metal-dependent hydrolases"/>
    <property type="match status" value="1"/>
</dbReference>
<dbReference type="Gene3D" id="1.10.2020.10">
    <property type="entry name" value="uronate isomerase, domain 2, chain A"/>
    <property type="match status" value="1"/>
</dbReference>
<dbReference type="HAMAP" id="MF_00675">
    <property type="entry name" value="UxaC"/>
    <property type="match status" value="1"/>
</dbReference>
<dbReference type="InterPro" id="IPR032466">
    <property type="entry name" value="Metal_Hydrolase"/>
</dbReference>
<dbReference type="InterPro" id="IPR003766">
    <property type="entry name" value="Uronate_isomerase"/>
</dbReference>
<dbReference type="NCBIfam" id="NF002794">
    <property type="entry name" value="PRK02925.1"/>
    <property type="match status" value="1"/>
</dbReference>
<dbReference type="PANTHER" id="PTHR30068">
    <property type="entry name" value="URONATE ISOMERASE"/>
    <property type="match status" value="1"/>
</dbReference>
<dbReference type="PANTHER" id="PTHR30068:SF4">
    <property type="entry name" value="URONATE ISOMERASE"/>
    <property type="match status" value="1"/>
</dbReference>
<dbReference type="Pfam" id="PF02614">
    <property type="entry name" value="UxaC"/>
    <property type="match status" value="1"/>
</dbReference>
<dbReference type="SUPFAM" id="SSF51556">
    <property type="entry name" value="Metallo-dependent hydrolases"/>
    <property type="match status" value="1"/>
</dbReference>
<keyword id="KW-0413">Isomerase</keyword>
<keyword id="KW-1185">Reference proteome</keyword>
<protein>
    <recommendedName>
        <fullName evidence="1">Uronate isomerase</fullName>
        <ecNumber evidence="1">5.3.1.12</ecNumber>
    </recommendedName>
    <alternativeName>
        <fullName evidence="1">Glucuronate isomerase</fullName>
    </alternativeName>
    <alternativeName>
        <fullName evidence="1">Uronic isomerase</fullName>
    </alternativeName>
</protein>
<evidence type="ECO:0000255" key="1">
    <source>
        <dbReference type="HAMAP-Rule" id="MF_00675"/>
    </source>
</evidence>
<organism>
    <name type="scientific">Oceanobacillus iheyensis (strain DSM 14371 / CIP 107618 / JCM 11309 / KCTC 3954 / HTE831)</name>
    <dbReference type="NCBI Taxonomy" id="221109"/>
    <lineage>
        <taxon>Bacteria</taxon>
        <taxon>Bacillati</taxon>
        <taxon>Bacillota</taxon>
        <taxon>Bacilli</taxon>
        <taxon>Bacillales</taxon>
        <taxon>Bacillaceae</taxon>
        <taxon>Oceanobacillus</taxon>
    </lineage>
</organism>
<name>UXAC_OCEIH</name>
<proteinExistence type="inferred from homology"/>
<feature type="chain" id="PRO_0000172778" description="Uronate isomerase">
    <location>
        <begin position="1"/>
        <end position="472"/>
    </location>
</feature>
<reference key="1">
    <citation type="journal article" date="2002" name="Nucleic Acids Res.">
        <title>Genome sequence of Oceanobacillus iheyensis isolated from the Iheya Ridge and its unexpected adaptive capabilities to extreme environments.</title>
        <authorList>
            <person name="Takami H."/>
            <person name="Takaki Y."/>
            <person name="Uchiyama I."/>
        </authorList>
    </citation>
    <scope>NUCLEOTIDE SEQUENCE [LARGE SCALE GENOMIC DNA]</scope>
    <source>
        <strain>DSM 14371 / CIP 107618 / JCM 11309 / KCTC 3954 / HTE831</strain>
    </source>
</reference>
<sequence>MKKFMDDNFLLSNDTAEELFHHYAKDMPIIDYHCHLSPKEIYMNKRYSNITEVWLYGDHYKWRAMRAAGVEESLITGDANDYDKFMAWAETVPKLIGNPLYNWTHLELQRYFGVDEILNKESGPSIWEKVNKCLAQDDFGVRELINQSNVQVVCTTDDPIDDLSFHQMLVEDDDFSVKVLPGFRPDKAIEINQEGFIDYVDSLEKVTSHSTKTYDGFLRALKSRVDYFHQNGCSVADHALNTMMFTETTKEKARNYYEKAMNGQKLSPKEESDFKSFTLVFLGEQYADKGWVMQYHINALRNNNSRMYNNLGPDTGYDAMNDEVISKPLVNLLNELEKKDRLPKTILYSLNPNDNPVIASIIGSFQRGGVPGKLQFGTAWWFNDTKSGMIKQMQTLADIGVFSQFIGMLTDSRSFLSYPRHEYFRRLVCSLIGEWVHNGEVPYDLKSLGEIVQDISYYNAARYFDFGLLSDE</sequence>
<comment type="catalytic activity">
    <reaction evidence="1">
        <text>D-glucuronate = D-fructuronate</text>
        <dbReference type="Rhea" id="RHEA:13049"/>
        <dbReference type="ChEBI" id="CHEBI:58720"/>
        <dbReference type="ChEBI" id="CHEBI:59863"/>
        <dbReference type="EC" id="5.3.1.12"/>
    </reaction>
</comment>
<comment type="catalytic activity">
    <reaction evidence="1">
        <text>aldehydo-D-galacturonate = keto-D-tagaturonate</text>
        <dbReference type="Rhea" id="RHEA:27702"/>
        <dbReference type="ChEBI" id="CHEBI:12952"/>
        <dbReference type="ChEBI" id="CHEBI:17886"/>
        <dbReference type="EC" id="5.3.1.12"/>
    </reaction>
</comment>
<comment type="pathway">
    <text evidence="1">Carbohydrate metabolism; pentose and glucuronate interconversion.</text>
</comment>
<comment type="similarity">
    <text evidence="1">Belongs to the metallo-dependent hydrolases superfamily. Uronate isomerase family.</text>
</comment>
<gene>
    <name evidence="1" type="primary">uxaC</name>
    <name type="ordered locus">OB0367</name>
</gene>
<accession>Q8CXN4</accession>